<protein>
    <recommendedName>
        <fullName>Serine/threonine-protein phosphatase 2A catalytic subunit A</fullName>
        <ecNumber>3.1.3.16</ecNumber>
    </recommendedName>
    <alternativeName>
        <fullName>Protein phosphatase 2A 37 kDa catalytic subunit</fullName>
    </alternativeName>
</protein>
<dbReference type="EC" id="3.1.3.16"/>
<dbReference type="EMBL" id="AF138278">
    <property type="protein sequence ID" value="AAD29693.1"/>
    <property type="molecule type" value="mRNA"/>
</dbReference>
<dbReference type="EMBL" id="AAFI02000162">
    <property type="protein sequence ID" value="EAL62258.1"/>
    <property type="molecule type" value="Genomic_DNA"/>
</dbReference>
<dbReference type="RefSeq" id="XP_635791.1">
    <property type="nucleotide sequence ID" value="XM_630699.1"/>
</dbReference>
<dbReference type="SMR" id="Q9XZE5"/>
<dbReference type="FunCoup" id="Q9XZE5">
    <property type="interactions" value="620"/>
</dbReference>
<dbReference type="STRING" id="44689.Q9XZE5"/>
<dbReference type="PaxDb" id="44689-DDB0191299"/>
<dbReference type="EnsemblProtists" id="EAL62258">
    <property type="protein sequence ID" value="EAL62258"/>
    <property type="gene ID" value="DDB_G0290263"/>
</dbReference>
<dbReference type="GeneID" id="8627596"/>
<dbReference type="KEGG" id="ddi:DDB_G0290263"/>
<dbReference type="dictyBase" id="DDB_G0290263">
    <property type="gene designation" value="pho2a"/>
</dbReference>
<dbReference type="VEuPathDB" id="AmoebaDB:DDB_G0290263"/>
<dbReference type="eggNOG" id="KOG0371">
    <property type="taxonomic scope" value="Eukaryota"/>
</dbReference>
<dbReference type="HOGENOM" id="CLU_004962_0_5_1"/>
<dbReference type="InParanoid" id="Q9XZE5"/>
<dbReference type="OMA" id="EGYNWGQ"/>
<dbReference type="PhylomeDB" id="Q9XZE5"/>
<dbReference type="BRENDA" id="3.1.3.16">
    <property type="organism ID" value="1939"/>
</dbReference>
<dbReference type="Reactome" id="R-DDI-113501">
    <property type="pathway name" value="Inhibition of replication initiation of damaged DNA by RB1/E2F1"/>
</dbReference>
<dbReference type="Reactome" id="R-DDI-198753">
    <property type="pathway name" value="ERK/MAPK targets"/>
</dbReference>
<dbReference type="Reactome" id="R-DDI-202670">
    <property type="pathway name" value="ERKs are inactivated"/>
</dbReference>
<dbReference type="Reactome" id="R-DDI-389513">
    <property type="pathway name" value="Co-inhibition by CTLA4"/>
</dbReference>
<dbReference type="Reactome" id="R-DDI-6811558">
    <property type="pathway name" value="PI5P, PP2A and IER3 Regulate PI3K/AKT Signaling"/>
</dbReference>
<dbReference type="Reactome" id="R-DDI-69231">
    <property type="pathway name" value="Cyclin D associated events in G1"/>
</dbReference>
<dbReference type="Reactome" id="R-DDI-69273">
    <property type="pathway name" value="Cyclin A/B1/B2 associated events during G2/M transition"/>
</dbReference>
<dbReference type="PRO" id="PR:Q9XZE5"/>
<dbReference type="Proteomes" id="UP000002195">
    <property type="component" value="Chromosome 5"/>
</dbReference>
<dbReference type="GO" id="GO:0005829">
    <property type="term" value="C:cytosol"/>
    <property type="evidence" value="ECO:0000314"/>
    <property type="project" value="dictyBase"/>
</dbReference>
<dbReference type="GO" id="GO:0016607">
    <property type="term" value="C:nuclear speck"/>
    <property type="evidence" value="ECO:0007669"/>
    <property type="project" value="UniProtKB-SubCell"/>
</dbReference>
<dbReference type="GO" id="GO:0000159">
    <property type="term" value="C:protein phosphatase type 2A complex"/>
    <property type="evidence" value="ECO:0000314"/>
    <property type="project" value="dictyBase"/>
</dbReference>
<dbReference type="GO" id="GO:0046872">
    <property type="term" value="F:metal ion binding"/>
    <property type="evidence" value="ECO:0007669"/>
    <property type="project" value="UniProtKB-KW"/>
</dbReference>
<dbReference type="GO" id="GO:0017018">
    <property type="term" value="F:myosin phosphatase activity"/>
    <property type="evidence" value="ECO:0000314"/>
    <property type="project" value="dictyBase"/>
</dbReference>
<dbReference type="GO" id="GO:0004722">
    <property type="term" value="F:protein serine/threonine phosphatase activity"/>
    <property type="evidence" value="ECO:0000314"/>
    <property type="project" value="dictyBase"/>
</dbReference>
<dbReference type="GO" id="GO:0000278">
    <property type="term" value="P:mitotic cell cycle"/>
    <property type="evidence" value="ECO:0000318"/>
    <property type="project" value="GO_Central"/>
</dbReference>
<dbReference type="GO" id="GO:0031034">
    <property type="term" value="P:myosin filament assembly"/>
    <property type="evidence" value="ECO:0000314"/>
    <property type="project" value="dictyBase"/>
</dbReference>
<dbReference type="CDD" id="cd07415">
    <property type="entry name" value="MPP_PP2A_PP4_PP6"/>
    <property type="match status" value="1"/>
</dbReference>
<dbReference type="FunFam" id="3.60.21.10:FF:000003">
    <property type="entry name" value="Serine/threonine-protein phosphatase"/>
    <property type="match status" value="1"/>
</dbReference>
<dbReference type="Gene3D" id="3.60.21.10">
    <property type="match status" value="1"/>
</dbReference>
<dbReference type="InterPro" id="IPR004843">
    <property type="entry name" value="Calcineurin-like_PHP_ApaH"/>
</dbReference>
<dbReference type="InterPro" id="IPR029052">
    <property type="entry name" value="Metallo-depent_PP-like"/>
</dbReference>
<dbReference type="InterPro" id="IPR047129">
    <property type="entry name" value="PPA2-like"/>
</dbReference>
<dbReference type="InterPro" id="IPR006186">
    <property type="entry name" value="Ser/Thr-sp_prot-phosphatase"/>
</dbReference>
<dbReference type="PANTHER" id="PTHR45619">
    <property type="entry name" value="SERINE/THREONINE-PROTEIN PHOSPHATASE PP2A-RELATED"/>
    <property type="match status" value="1"/>
</dbReference>
<dbReference type="Pfam" id="PF00149">
    <property type="entry name" value="Metallophos"/>
    <property type="match status" value="1"/>
</dbReference>
<dbReference type="PRINTS" id="PR00114">
    <property type="entry name" value="STPHPHTASE"/>
</dbReference>
<dbReference type="SMART" id="SM00156">
    <property type="entry name" value="PP2Ac"/>
    <property type="match status" value="1"/>
</dbReference>
<dbReference type="SUPFAM" id="SSF56300">
    <property type="entry name" value="Metallo-dependent phosphatases"/>
    <property type="match status" value="1"/>
</dbReference>
<dbReference type="PROSITE" id="PS00125">
    <property type="entry name" value="SER_THR_PHOSPHATASE"/>
    <property type="match status" value="1"/>
</dbReference>
<feature type="chain" id="PRO_0000368206" description="Serine/threonine-protein phosphatase 2A catalytic subunit A">
    <location>
        <begin position="1"/>
        <end position="306"/>
    </location>
</feature>
<feature type="active site" description="Proton donor" evidence="1">
    <location>
        <position position="115"/>
    </location>
</feature>
<feature type="binding site" evidence="1">
    <location>
        <position position="54"/>
    </location>
    <ligand>
        <name>Mn(2+)</name>
        <dbReference type="ChEBI" id="CHEBI:29035"/>
        <label>1</label>
    </ligand>
</feature>
<feature type="binding site" evidence="1">
    <location>
        <position position="56"/>
    </location>
    <ligand>
        <name>Mn(2+)</name>
        <dbReference type="ChEBI" id="CHEBI:29035"/>
        <label>1</label>
    </ligand>
</feature>
<feature type="binding site" evidence="1">
    <location>
        <position position="82"/>
    </location>
    <ligand>
        <name>Mn(2+)</name>
        <dbReference type="ChEBI" id="CHEBI:29035"/>
        <label>1</label>
    </ligand>
</feature>
<feature type="binding site" evidence="1">
    <location>
        <position position="82"/>
    </location>
    <ligand>
        <name>Mn(2+)</name>
        <dbReference type="ChEBI" id="CHEBI:29035"/>
        <label>2</label>
    </ligand>
</feature>
<feature type="binding site" evidence="1">
    <location>
        <position position="114"/>
    </location>
    <ligand>
        <name>Mn(2+)</name>
        <dbReference type="ChEBI" id="CHEBI:29035"/>
        <label>2</label>
    </ligand>
</feature>
<feature type="binding site" evidence="1">
    <location>
        <position position="164"/>
    </location>
    <ligand>
        <name>Mn(2+)</name>
        <dbReference type="ChEBI" id="CHEBI:29035"/>
        <label>2</label>
    </ligand>
</feature>
<feature type="binding site" evidence="1">
    <location>
        <position position="238"/>
    </location>
    <ligand>
        <name>Mn(2+)</name>
        <dbReference type="ChEBI" id="CHEBI:29035"/>
        <label>2</label>
    </ligand>
</feature>
<feature type="modified residue" description="Leucine methyl ester" evidence="1">
    <location>
        <position position="306"/>
    </location>
</feature>
<comment type="function">
    <text evidence="2">Plays a role in activating the myosin contractile function. Dephosphorylates threonine at 'Thr-1823', 'Thr-1833' and 'Thr-2029' in the C-terminal tail region of myosin II heavy chain (mhcA). Drives the assembly of dephosphorylated myosin II filaments to allow myosin recruitment into the cytoskeleton.</text>
</comment>
<comment type="catalytic activity">
    <reaction>
        <text>O-phospho-L-seryl-[protein] + H2O = L-seryl-[protein] + phosphate</text>
        <dbReference type="Rhea" id="RHEA:20629"/>
        <dbReference type="Rhea" id="RHEA-COMP:9863"/>
        <dbReference type="Rhea" id="RHEA-COMP:11604"/>
        <dbReference type="ChEBI" id="CHEBI:15377"/>
        <dbReference type="ChEBI" id="CHEBI:29999"/>
        <dbReference type="ChEBI" id="CHEBI:43474"/>
        <dbReference type="ChEBI" id="CHEBI:83421"/>
        <dbReference type="EC" id="3.1.3.16"/>
    </reaction>
</comment>
<comment type="catalytic activity">
    <reaction>
        <text>O-phospho-L-threonyl-[protein] + H2O = L-threonyl-[protein] + phosphate</text>
        <dbReference type="Rhea" id="RHEA:47004"/>
        <dbReference type="Rhea" id="RHEA-COMP:11060"/>
        <dbReference type="Rhea" id="RHEA-COMP:11605"/>
        <dbReference type="ChEBI" id="CHEBI:15377"/>
        <dbReference type="ChEBI" id="CHEBI:30013"/>
        <dbReference type="ChEBI" id="CHEBI:43474"/>
        <dbReference type="ChEBI" id="CHEBI:61977"/>
        <dbReference type="EC" id="3.1.3.16"/>
    </reaction>
</comment>
<comment type="cofactor">
    <cofactor evidence="1">
        <name>Mn(2+)</name>
        <dbReference type="ChEBI" id="CHEBI:29035"/>
    </cofactor>
    <text evidence="1">Binds 2 manganese ions per subunit.</text>
</comment>
<comment type="subunit">
    <text evidence="2">PP2A consists of a trimeric holoenzyme, composed of a 37 kDa catalytic subunit (C subunit) and a 65 kDa constant regulatory subunit (A subunit), that associates with a variety of regulatory subunits (B subunit) such as phr2AB (B55) and psrA (B56 homolog). The trimer may partially dissociates into a core 'AC' dimer equally active compared to the trimer.</text>
</comment>
<comment type="subcellular location">
    <subcellularLocation>
        <location>Cytoplasm</location>
        <location>Cytosol</location>
    </subcellularLocation>
    <subcellularLocation>
        <location>Nucleus speckle</location>
    </subcellularLocation>
</comment>
<comment type="PTM">
    <text evidence="1">Reversibly methyl esterified on Leu-306 by leucine carboxyl methyltransferase 1 (LCMT) and protein phosphatase methylesterase 1 (PPME1). Carboxyl methylation influences the affinity of the catalytic subunit for the different regulatory subunits, thereby modulating the PP2A holoenzyme's substrate specificity, enzyme activity and cellular localization (By similarity).</text>
</comment>
<comment type="similarity">
    <text evidence="3">Belongs to the PPP phosphatase family. PP-2A subfamily.</text>
</comment>
<name>PP2AA_DICDI</name>
<sequence>MGEFQDVDKYISILKECKPLSESEVRDLCEKAREILSKESNVQPVRCPVTVCGDIHGQFHDLMELFKIGGNCPDTNYLFMGDYVDRGFYSVETVTLLVALKVRYKDRVTILRGNHESRQITQVYGFYDECLRKYGNPNVWKLFTDLFDYLPLTALIENQVFCLHGGLSPSIDTLDHIENLDRVQEVPHEGAMCDLLWSDPDDRLGFGYSPRGAGYTFGKDISEQFNHNNGLTLVARAHQLVMEGYNWCHDQNVVTIFSAPNYCYRCGNLAAIMEIDEKMKHTFLQFDPAPRRGEPHVTRRTPDYFL</sequence>
<reference key="1">
    <citation type="journal article" date="1999" name="FEBS Lett.">
        <title>Molecular characterization and immunolocalization of Dictyostelium discoideum protein phosphatase 2A.</title>
        <authorList>
            <person name="Murphy M.B."/>
            <person name="Levi S.K."/>
            <person name="Egelhoff T.T."/>
        </authorList>
    </citation>
    <scope>NUCLEOTIDE SEQUENCE [MRNA]</scope>
    <scope>SUBCELLULAR LOCATION</scope>
</reference>
<reference key="2">
    <citation type="journal article" date="2005" name="Nature">
        <title>The genome of the social amoeba Dictyostelium discoideum.</title>
        <authorList>
            <person name="Eichinger L."/>
            <person name="Pachebat J.A."/>
            <person name="Gloeckner G."/>
            <person name="Rajandream M.A."/>
            <person name="Sucgang R."/>
            <person name="Berriman M."/>
            <person name="Song J."/>
            <person name="Olsen R."/>
            <person name="Szafranski K."/>
            <person name="Xu Q."/>
            <person name="Tunggal B."/>
            <person name="Kummerfeld S."/>
            <person name="Madera M."/>
            <person name="Konfortov B.A."/>
            <person name="Rivero F."/>
            <person name="Bankier A.T."/>
            <person name="Lehmann R."/>
            <person name="Hamlin N."/>
            <person name="Davies R."/>
            <person name="Gaudet P."/>
            <person name="Fey P."/>
            <person name="Pilcher K."/>
            <person name="Chen G."/>
            <person name="Saunders D."/>
            <person name="Sodergren E.J."/>
            <person name="Davis P."/>
            <person name="Kerhornou A."/>
            <person name="Nie X."/>
            <person name="Hall N."/>
            <person name="Anjard C."/>
            <person name="Hemphill L."/>
            <person name="Bason N."/>
            <person name="Farbrother P."/>
            <person name="Desany B."/>
            <person name="Just E."/>
            <person name="Morio T."/>
            <person name="Rost R."/>
            <person name="Churcher C.M."/>
            <person name="Cooper J."/>
            <person name="Haydock S."/>
            <person name="van Driessche N."/>
            <person name="Cronin A."/>
            <person name="Goodhead I."/>
            <person name="Muzny D.M."/>
            <person name="Mourier T."/>
            <person name="Pain A."/>
            <person name="Lu M."/>
            <person name="Harper D."/>
            <person name="Lindsay R."/>
            <person name="Hauser H."/>
            <person name="James K.D."/>
            <person name="Quiles M."/>
            <person name="Madan Babu M."/>
            <person name="Saito T."/>
            <person name="Buchrieser C."/>
            <person name="Wardroper A."/>
            <person name="Felder M."/>
            <person name="Thangavelu M."/>
            <person name="Johnson D."/>
            <person name="Knights A."/>
            <person name="Loulseged H."/>
            <person name="Mungall K.L."/>
            <person name="Oliver K."/>
            <person name="Price C."/>
            <person name="Quail M.A."/>
            <person name="Urushihara H."/>
            <person name="Hernandez J."/>
            <person name="Rabbinowitsch E."/>
            <person name="Steffen D."/>
            <person name="Sanders M."/>
            <person name="Ma J."/>
            <person name="Kohara Y."/>
            <person name="Sharp S."/>
            <person name="Simmonds M.N."/>
            <person name="Spiegler S."/>
            <person name="Tivey A."/>
            <person name="Sugano S."/>
            <person name="White B."/>
            <person name="Walker D."/>
            <person name="Woodward J.R."/>
            <person name="Winckler T."/>
            <person name="Tanaka Y."/>
            <person name="Shaulsky G."/>
            <person name="Schleicher M."/>
            <person name="Weinstock G.M."/>
            <person name="Rosenthal A."/>
            <person name="Cox E.C."/>
            <person name="Chisholm R.L."/>
            <person name="Gibbs R.A."/>
            <person name="Loomis W.F."/>
            <person name="Platzer M."/>
            <person name="Kay R.R."/>
            <person name="Williams J.G."/>
            <person name="Dear P.H."/>
            <person name="Noegel A.A."/>
            <person name="Barrell B.G."/>
            <person name="Kuspa A."/>
        </authorList>
    </citation>
    <scope>NUCLEOTIDE SEQUENCE [LARGE SCALE GENOMIC DNA]</scope>
    <source>
        <strain>AX4</strain>
    </source>
</reference>
<reference key="3">
    <citation type="journal article" date="1999" name="Eur. J. Biochem.">
        <title>Biochemical characterization of a Dictyostelium myosin II heavy-chain phosphatase that promotes filament assembly.</title>
        <authorList>
            <person name="Murphy M.B."/>
            <person name="Egelhoff T.T."/>
        </authorList>
    </citation>
    <scope>FUNCTION</scope>
    <scope>SUBUNIT</scope>
    <scope>SUBCELLULAR LOCATION</scope>
</reference>
<reference key="4">
    <citation type="journal article" date="2008" name="Differentiation">
        <title>The function of PP2A/B56 in non-metazoan multicellular development.</title>
        <authorList>
            <person name="Lee N.-S."/>
            <person name="Veeranki S."/>
            <person name="Kim B."/>
            <person name="Kim L."/>
        </authorList>
    </citation>
    <scope>SUBCELLULAR LOCATION</scope>
</reference>
<gene>
    <name type="primary">pho2a</name>
    <name type="synonym">PP2A</name>
    <name type="synonym">PP2Ac</name>
    <name type="ORF">DDB_G0290263</name>
</gene>
<organism>
    <name type="scientific">Dictyostelium discoideum</name>
    <name type="common">Social amoeba</name>
    <dbReference type="NCBI Taxonomy" id="44689"/>
    <lineage>
        <taxon>Eukaryota</taxon>
        <taxon>Amoebozoa</taxon>
        <taxon>Evosea</taxon>
        <taxon>Eumycetozoa</taxon>
        <taxon>Dictyostelia</taxon>
        <taxon>Dictyosteliales</taxon>
        <taxon>Dictyosteliaceae</taxon>
        <taxon>Dictyostelium</taxon>
    </lineage>
</organism>
<proteinExistence type="evidence at protein level"/>
<evidence type="ECO:0000250" key="1"/>
<evidence type="ECO:0000269" key="2">
    <source>
    </source>
</evidence>
<evidence type="ECO:0000305" key="3"/>
<keyword id="KW-0963">Cytoplasm</keyword>
<keyword id="KW-0378">Hydrolase</keyword>
<keyword id="KW-0464">Manganese</keyword>
<keyword id="KW-0479">Metal-binding</keyword>
<keyword id="KW-0488">Methylation</keyword>
<keyword id="KW-0539">Nucleus</keyword>
<keyword id="KW-0904">Protein phosphatase</keyword>
<keyword id="KW-1185">Reference proteome</keyword>
<accession>Q9XZE5</accession>
<accession>Q54G92</accession>